<sequence length="464" mass="53702">MGLNKQDLYIYRKQYGVNLGAWFCAERWINDFLFTGEGSSELEAVSGNVKAHGIDKARENFEAHWKSWIGIEDFSYMKQHLVNSVRIPLGYWSLGNDELVKGTPFEPYAEVYRNSLHILCEKIQEAGSLSIGVLLDFHGVYGGGNCDGHSGTSSGKAEFYEKQEYQDRTVEAVKFLSSKIGQFENVIGIQVINEPIWGQYDVLANFYQKARSVVPSYLPVYIGDGWDKDHWVNWVNDHESEGFYVVDHHSYFCFGGELCHAPPKLITRRLDTGEEYGKTKLSNIVIGEWSCTLSQESWSQTKLHDKRRRDFGEAQLNQYLNYCGGCFFWTYKFLHGKGGDWDFRSVVEDKVINYPPPPPTENKAMPALLEQSRDQNFGGHCYYWDQKQHDHPYEHDLYVKGWNQAWEDYIEFLQHGAMIGFPRAWTQKRMTSISSASAWEYRDGMNAAWLHLERMGFLNPFRHP</sequence>
<proteinExistence type="inferred from homology"/>
<accession>O74799</accession>
<dbReference type="EC" id="3.2.1.58"/>
<dbReference type="EMBL" id="CU329671">
    <property type="protein sequence ID" value="CAA21163.1"/>
    <property type="molecule type" value="Genomic_DNA"/>
</dbReference>
<dbReference type="PIR" id="T40108">
    <property type="entry name" value="T40108"/>
</dbReference>
<dbReference type="RefSeq" id="NP_596224.1">
    <property type="nucleotide sequence ID" value="NM_001022144.2"/>
</dbReference>
<dbReference type="SMR" id="O74799"/>
<dbReference type="BioGRID" id="276827">
    <property type="interactions" value="32"/>
</dbReference>
<dbReference type="FunCoup" id="O74799">
    <property type="interactions" value="13"/>
</dbReference>
<dbReference type="STRING" id="284812.O74799"/>
<dbReference type="CAZy" id="GH5">
    <property type="family name" value="Glycoside Hydrolase Family 5"/>
</dbReference>
<dbReference type="PaxDb" id="4896-SPBC2D10.05.1"/>
<dbReference type="EnsemblFungi" id="SPBC2D10.05.1">
    <property type="protein sequence ID" value="SPBC2D10.05.1:pep"/>
    <property type="gene ID" value="SPBC2D10.05"/>
</dbReference>
<dbReference type="GeneID" id="2540296"/>
<dbReference type="KEGG" id="spo:2540296"/>
<dbReference type="PomBase" id="SPBC2D10.05">
    <property type="gene designation" value="exg3"/>
</dbReference>
<dbReference type="VEuPathDB" id="FungiDB:SPBC2D10.05"/>
<dbReference type="eggNOG" id="ENOG502QVVM">
    <property type="taxonomic scope" value="Eukaryota"/>
</dbReference>
<dbReference type="HOGENOM" id="CLU_004624_8_2_1"/>
<dbReference type="InParanoid" id="O74799"/>
<dbReference type="OMA" id="GWFFWTL"/>
<dbReference type="PhylomeDB" id="O74799"/>
<dbReference type="PRO" id="PR:O74799"/>
<dbReference type="Proteomes" id="UP000002485">
    <property type="component" value="Chromosome II"/>
</dbReference>
<dbReference type="GO" id="GO:0005737">
    <property type="term" value="C:cytoplasm"/>
    <property type="evidence" value="ECO:0000314"/>
    <property type="project" value="PomBase"/>
</dbReference>
<dbReference type="GO" id="GO:0005829">
    <property type="term" value="C:cytosol"/>
    <property type="evidence" value="ECO:0007005"/>
    <property type="project" value="PomBase"/>
</dbReference>
<dbReference type="GO" id="GO:1990819">
    <property type="term" value="C:mating projection actin fusion focus"/>
    <property type="evidence" value="ECO:0000314"/>
    <property type="project" value="PomBase"/>
</dbReference>
<dbReference type="GO" id="GO:0005634">
    <property type="term" value="C:nucleus"/>
    <property type="evidence" value="ECO:0007005"/>
    <property type="project" value="PomBase"/>
</dbReference>
<dbReference type="GO" id="GO:0046557">
    <property type="term" value="F:glucan endo-1,6-beta-glucosidase activity"/>
    <property type="evidence" value="ECO:0000314"/>
    <property type="project" value="PomBase"/>
</dbReference>
<dbReference type="GO" id="GO:0004338">
    <property type="term" value="F:glucan exo-1,3-beta-glucosidase activity"/>
    <property type="evidence" value="ECO:0000318"/>
    <property type="project" value="GO_Central"/>
</dbReference>
<dbReference type="GO" id="GO:0070879">
    <property type="term" value="P:fungal-type cell wall beta-glucan metabolic process"/>
    <property type="evidence" value="ECO:0000315"/>
    <property type="project" value="PomBase"/>
</dbReference>
<dbReference type="GO" id="GO:1904541">
    <property type="term" value="P:fungal-type cell wall disassembly involved in conjugation with cellular fusion"/>
    <property type="evidence" value="ECO:0000316"/>
    <property type="project" value="PomBase"/>
</dbReference>
<dbReference type="GO" id="GO:0009251">
    <property type="term" value="P:glucan catabolic process"/>
    <property type="evidence" value="ECO:0000318"/>
    <property type="project" value="GO_Central"/>
</dbReference>
<dbReference type="FunFam" id="3.20.20.80:FF:000100">
    <property type="entry name" value="Glycoside hydrolase superfamily"/>
    <property type="match status" value="1"/>
</dbReference>
<dbReference type="Gene3D" id="3.20.20.80">
    <property type="entry name" value="Glycosidases"/>
    <property type="match status" value="1"/>
</dbReference>
<dbReference type="InterPro" id="IPR017853">
    <property type="entry name" value="Glycoside_hydrolase_SF"/>
</dbReference>
<dbReference type="InterPro" id="IPR050386">
    <property type="entry name" value="Glycosyl_hydrolase_5"/>
</dbReference>
<dbReference type="PANTHER" id="PTHR31297:SF43">
    <property type="entry name" value="GLUCAN 1,3-BETA-GLUCOSIDASE 3"/>
    <property type="match status" value="1"/>
</dbReference>
<dbReference type="PANTHER" id="PTHR31297">
    <property type="entry name" value="GLUCAN ENDO-1,6-BETA-GLUCOSIDASE B"/>
    <property type="match status" value="1"/>
</dbReference>
<dbReference type="SUPFAM" id="SSF51445">
    <property type="entry name" value="(Trans)glycosidases"/>
    <property type="match status" value="1"/>
</dbReference>
<dbReference type="PROSITE" id="PS00659">
    <property type="entry name" value="GLYCOSYL_HYDROL_F5"/>
    <property type="match status" value="1"/>
</dbReference>
<reference key="1">
    <citation type="journal article" date="2002" name="Nature">
        <title>The genome sequence of Schizosaccharomyces pombe.</title>
        <authorList>
            <person name="Wood V."/>
            <person name="Gwilliam R."/>
            <person name="Rajandream M.A."/>
            <person name="Lyne M.H."/>
            <person name="Lyne R."/>
            <person name="Stewart A."/>
            <person name="Sgouros J.G."/>
            <person name="Peat N."/>
            <person name="Hayles J."/>
            <person name="Baker S.G."/>
            <person name="Basham D."/>
            <person name="Bowman S."/>
            <person name="Brooks K."/>
            <person name="Brown D."/>
            <person name="Brown S."/>
            <person name="Chillingworth T."/>
            <person name="Churcher C.M."/>
            <person name="Collins M."/>
            <person name="Connor R."/>
            <person name="Cronin A."/>
            <person name="Davis P."/>
            <person name="Feltwell T."/>
            <person name="Fraser A."/>
            <person name="Gentles S."/>
            <person name="Goble A."/>
            <person name="Hamlin N."/>
            <person name="Harris D.E."/>
            <person name="Hidalgo J."/>
            <person name="Hodgson G."/>
            <person name="Holroyd S."/>
            <person name="Hornsby T."/>
            <person name="Howarth S."/>
            <person name="Huckle E.J."/>
            <person name="Hunt S."/>
            <person name="Jagels K."/>
            <person name="James K.D."/>
            <person name="Jones L."/>
            <person name="Jones M."/>
            <person name="Leather S."/>
            <person name="McDonald S."/>
            <person name="McLean J."/>
            <person name="Mooney P."/>
            <person name="Moule S."/>
            <person name="Mungall K.L."/>
            <person name="Murphy L.D."/>
            <person name="Niblett D."/>
            <person name="Odell C."/>
            <person name="Oliver K."/>
            <person name="O'Neil S."/>
            <person name="Pearson D."/>
            <person name="Quail M.A."/>
            <person name="Rabbinowitsch E."/>
            <person name="Rutherford K.M."/>
            <person name="Rutter S."/>
            <person name="Saunders D."/>
            <person name="Seeger K."/>
            <person name="Sharp S."/>
            <person name="Skelton J."/>
            <person name="Simmonds M.N."/>
            <person name="Squares R."/>
            <person name="Squares S."/>
            <person name="Stevens K."/>
            <person name="Taylor K."/>
            <person name="Taylor R.G."/>
            <person name="Tivey A."/>
            <person name="Walsh S.V."/>
            <person name="Warren T."/>
            <person name="Whitehead S."/>
            <person name="Woodward J.R."/>
            <person name="Volckaert G."/>
            <person name="Aert R."/>
            <person name="Robben J."/>
            <person name="Grymonprez B."/>
            <person name="Weltjens I."/>
            <person name="Vanstreels E."/>
            <person name="Rieger M."/>
            <person name="Schaefer M."/>
            <person name="Mueller-Auer S."/>
            <person name="Gabel C."/>
            <person name="Fuchs M."/>
            <person name="Duesterhoeft A."/>
            <person name="Fritzc C."/>
            <person name="Holzer E."/>
            <person name="Moestl D."/>
            <person name="Hilbert H."/>
            <person name="Borzym K."/>
            <person name="Langer I."/>
            <person name="Beck A."/>
            <person name="Lehrach H."/>
            <person name="Reinhardt R."/>
            <person name="Pohl T.M."/>
            <person name="Eger P."/>
            <person name="Zimmermann W."/>
            <person name="Wedler H."/>
            <person name="Wambutt R."/>
            <person name="Purnelle B."/>
            <person name="Goffeau A."/>
            <person name="Cadieu E."/>
            <person name="Dreano S."/>
            <person name="Gloux S."/>
            <person name="Lelaure V."/>
            <person name="Mottier S."/>
            <person name="Galibert F."/>
            <person name="Aves S.J."/>
            <person name="Xiang Z."/>
            <person name="Hunt C."/>
            <person name="Moore K."/>
            <person name="Hurst S.M."/>
            <person name="Lucas M."/>
            <person name="Rochet M."/>
            <person name="Gaillardin C."/>
            <person name="Tallada V.A."/>
            <person name="Garzon A."/>
            <person name="Thode G."/>
            <person name="Daga R.R."/>
            <person name="Cruzado L."/>
            <person name="Jimenez J."/>
            <person name="Sanchez M."/>
            <person name="del Rey F."/>
            <person name="Benito J."/>
            <person name="Dominguez A."/>
            <person name="Revuelta J.L."/>
            <person name="Moreno S."/>
            <person name="Armstrong J."/>
            <person name="Forsburg S.L."/>
            <person name="Cerutti L."/>
            <person name="Lowe T."/>
            <person name="McCombie W.R."/>
            <person name="Paulsen I."/>
            <person name="Potashkin J."/>
            <person name="Shpakovski G.V."/>
            <person name="Ussery D."/>
            <person name="Barrell B.G."/>
            <person name="Nurse P."/>
        </authorList>
    </citation>
    <scope>NUCLEOTIDE SEQUENCE [LARGE SCALE GENOMIC DNA]</scope>
    <source>
        <strain>972 / ATCC 24843</strain>
    </source>
</reference>
<organism>
    <name type="scientific">Schizosaccharomyces pombe (strain 972 / ATCC 24843)</name>
    <name type="common">Fission yeast</name>
    <dbReference type="NCBI Taxonomy" id="284812"/>
    <lineage>
        <taxon>Eukaryota</taxon>
        <taxon>Fungi</taxon>
        <taxon>Dikarya</taxon>
        <taxon>Ascomycota</taxon>
        <taxon>Taphrinomycotina</taxon>
        <taxon>Schizosaccharomycetes</taxon>
        <taxon>Schizosaccharomycetales</taxon>
        <taxon>Schizosaccharomycetaceae</taxon>
        <taxon>Schizosaccharomyces</taxon>
    </lineage>
</organism>
<evidence type="ECO:0000305" key="1"/>
<name>EXG3_SCHPO</name>
<keyword id="KW-0961">Cell wall biogenesis/degradation</keyword>
<keyword id="KW-0326">Glycosidase</keyword>
<keyword id="KW-0378">Hydrolase</keyword>
<keyword id="KW-1185">Reference proteome</keyword>
<gene>
    <name type="primary">exg3</name>
    <name type="ORF">SPBC2D10.05</name>
</gene>
<protein>
    <recommendedName>
        <fullName>Glucan 1,3-beta-glucosidase 3</fullName>
        <ecNumber>3.2.1.58</ecNumber>
    </recommendedName>
    <alternativeName>
        <fullName>Exo-1,3-beta-glucanase 3</fullName>
    </alternativeName>
</protein>
<feature type="chain" id="PRO_0000184054" description="Glucan 1,3-beta-glucosidase 3">
    <location>
        <begin position="1"/>
        <end position="464"/>
    </location>
</feature>
<comment type="catalytic activity">
    <reaction>
        <text>Successive hydrolysis of beta-D-glucose units from the non-reducing ends of (1-&gt;3)-beta-D-glucans, releasing alpha-glucose.</text>
        <dbReference type="EC" id="3.2.1.58"/>
    </reaction>
</comment>
<comment type="similarity">
    <text evidence="1">Belongs to the glycosyl hydrolase 5 (cellulase A) family.</text>
</comment>